<evidence type="ECO:0000250" key="1"/>
<evidence type="ECO:0000255" key="2"/>
<evidence type="ECO:0000255" key="3">
    <source>
        <dbReference type="PROSITE-ProRule" id="PRU00077"/>
    </source>
</evidence>
<evidence type="ECO:0000255" key="4">
    <source>
        <dbReference type="PROSITE-ProRule" id="PRU00406"/>
    </source>
</evidence>
<evidence type="ECO:0000255" key="5">
    <source>
        <dbReference type="PROSITE-ProRule" id="PRU00448"/>
    </source>
</evidence>
<evidence type="ECO:0000256" key="6">
    <source>
        <dbReference type="SAM" id="MobiDB-lite"/>
    </source>
</evidence>
<evidence type="ECO:0000305" key="7"/>
<reference key="1">
    <citation type="journal article" date="2005" name="Nature">
        <title>Genomic sequence of the pathogenic and allergenic filamentous fungus Aspergillus fumigatus.</title>
        <authorList>
            <person name="Nierman W.C."/>
            <person name="Pain A."/>
            <person name="Anderson M.J."/>
            <person name="Wortman J.R."/>
            <person name="Kim H.S."/>
            <person name="Arroyo J."/>
            <person name="Berriman M."/>
            <person name="Abe K."/>
            <person name="Archer D.B."/>
            <person name="Bermejo C."/>
            <person name="Bennett J.W."/>
            <person name="Bowyer P."/>
            <person name="Chen D."/>
            <person name="Collins M."/>
            <person name="Coulsen R."/>
            <person name="Davies R."/>
            <person name="Dyer P.S."/>
            <person name="Farman M.L."/>
            <person name="Fedorova N."/>
            <person name="Fedorova N.D."/>
            <person name="Feldblyum T.V."/>
            <person name="Fischer R."/>
            <person name="Fosker N."/>
            <person name="Fraser A."/>
            <person name="Garcia J.L."/>
            <person name="Garcia M.J."/>
            <person name="Goble A."/>
            <person name="Goldman G.H."/>
            <person name="Gomi K."/>
            <person name="Griffith-Jones S."/>
            <person name="Gwilliam R."/>
            <person name="Haas B.J."/>
            <person name="Haas H."/>
            <person name="Harris D.E."/>
            <person name="Horiuchi H."/>
            <person name="Huang J."/>
            <person name="Humphray S."/>
            <person name="Jimenez J."/>
            <person name="Keller N."/>
            <person name="Khouri H."/>
            <person name="Kitamoto K."/>
            <person name="Kobayashi T."/>
            <person name="Konzack S."/>
            <person name="Kulkarni R."/>
            <person name="Kumagai T."/>
            <person name="Lafton A."/>
            <person name="Latge J.-P."/>
            <person name="Li W."/>
            <person name="Lord A."/>
            <person name="Lu C."/>
            <person name="Majoros W.H."/>
            <person name="May G.S."/>
            <person name="Miller B.L."/>
            <person name="Mohamoud Y."/>
            <person name="Molina M."/>
            <person name="Monod M."/>
            <person name="Mouyna I."/>
            <person name="Mulligan S."/>
            <person name="Murphy L.D."/>
            <person name="O'Neil S."/>
            <person name="Paulsen I."/>
            <person name="Penalva M.A."/>
            <person name="Pertea M."/>
            <person name="Price C."/>
            <person name="Pritchard B.L."/>
            <person name="Quail M.A."/>
            <person name="Rabbinowitsch E."/>
            <person name="Rawlins N."/>
            <person name="Rajandream M.A."/>
            <person name="Reichard U."/>
            <person name="Renauld H."/>
            <person name="Robson G.D."/>
            <person name="Rodriguez de Cordoba S."/>
            <person name="Rodriguez-Pena J.M."/>
            <person name="Ronning C.M."/>
            <person name="Rutter S."/>
            <person name="Salzberg S.L."/>
            <person name="Sanchez M."/>
            <person name="Sanchez-Ferrero J.C."/>
            <person name="Saunders D."/>
            <person name="Seeger K."/>
            <person name="Squares R."/>
            <person name="Squares S."/>
            <person name="Takeuchi M."/>
            <person name="Tekaia F."/>
            <person name="Turner G."/>
            <person name="Vazquez de Aldana C.R."/>
            <person name="Weidman J."/>
            <person name="White O."/>
            <person name="Woodward J.R."/>
            <person name="Yu J.-H."/>
            <person name="Fraser C.M."/>
            <person name="Galagan J.E."/>
            <person name="Asai K."/>
            <person name="Machida M."/>
            <person name="Hall N."/>
            <person name="Barrell B.G."/>
            <person name="Denning D.W."/>
        </authorList>
    </citation>
    <scope>NUCLEOTIDE SEQUENCE [LARGE SCALE GENOMIC DNA]</scope>
    <source>
        <strain>ATCC MYA-4609 / CBS 101355 / FGSC A1100 / Af293</strain>
    </source>
</reference>
<name>PAN1_ASPFU</name>
<accession>Q4WG58</accession>
<comment type="function">
    <text evidence="1">Component of the PAN1 actin cytoskeleton-regulatory complex required for the internalization of endosomes during actin-coupled endocytosis. The complex links the site of endocytosis to the cell membrane-associated actin cytoskeleton. Mediates uptake of external molecules and vacuolar degradation of plasma membrane proteins. Plays a role in the proper organization of the cell membrane-associated actin cytoskeleton and promotes its destabilization (By similarity).</text>
</comment>
<comment type="subunit">
    <text evidence="1">Component of the PAN1 actin cytoskeleton-regulatory complex.</text>
</comment>
<comment type="subcellular location">
    <subcellularLocation>
        <location evidence="1">Cell membrane</location>
        <topology evidence="1">Peripheral membrane protein</topology>
        <orientation evidence="1">Cytoplasmic side</orientation>
    </subcellularLocation>
    <subcellularLocation>
        <location evidence="1">Endosome membrane</location>
        <topology evidence="1">Peripheral membrane protein</topology>
        <orientation evidence="1">Cytoplasmic side</orientation>
    </subcellularLocation>
    <subcellularLocation>
        <location evidence="1">Cytoplasm</location>
        <location evidence="1">Cytoskeleton</location>
        <location evidence="1">Actin patch</location>
    </subcellularLocation>
    <text evidence="1">Cytoplasmic and cortical actin patches.</text>
</comment>
<comment type="similarity">
    <text evidence="7">Belongs to the PAN1 family.</text>
</comment>
<protein>
    <recommendedName>
        <fullName>Actin cytoskeleton-regulatory complex protein pan1</fullName>
    </recommendedName>
</protein>
<feature type="chain" id="PRO_0000349466" description="Actin cytoskeleton-regulatory complex protein pan1">
    <location>
        <begin position="1"/>
        <end position="1467"/>
    </location>
</feature>
<feature type="domain" description="EH 1" evidence="3">
    <location>
        <begin position="169"/>
        <end position="257"/>
    </location>
</feature>
<feature type="domain" description="EF-hand 1" evidence="5">
    <location>
        <begin position="201"/>
        <end position="236"/>
    </location>
</feature>
<feature type="domain" description="EH 2" evidence="3">
    <location>
        <begin position="458"/>
        <end position="547"/>
    </location>
</feature>
<feature type="domain" description="EF-hand 2" evidence="5">
    <location>
        <begin position="491"/>
        <end position="526"/>
    </location>
</feature>
<feature type="domain" description="WH2" evidence="4">
    <location>
        <begin position="1434"/>
        <end position="1451"/>
    </location>
</feature>
<feature type="region of interest" description="Disordered" evidence="6">
    <location>
        <begin position="1"/>
        <end position="157"/>
    </location>
</feature>
<feature type="region of interest" description="Disordered" evidence="6">
    <location>
        <begin position="266"/>
        <end position="376"/>
    </location>
</feature>
<feature type="region of interest" description="Disordered" evidence="6">
    <location>
        <begin position="613"/>
        <end position="643"/>
    </location>
</feature>
<feature type="region of interest" description="Disordered" evidence="6">
    <location>
        <begin position="822"/>
        <end position="864"/>
    </location>
</feature>
<feature type="region of interest" description="Disordered" evidence="6">
    <location>
        <begin position="888"/>
        <end position="1087"/>
    </location>
</feature>
<feature type="region of interest" description="Disordered" evidence="6">
    <location>
        <begin position="1101"/>
        <end position="1467"/>
    </location>
</feature>
<feature type="coiled-coil region" evidence="2">
    <location>
        <begin position="634"/>
        <end position="758"/>
    </location>
</feature>
<feature type="coiled-coil region" evidence="2">
    <location>
        <begin position="965"/>
        <end position="1162"/>
    </location>
</feature>
<feature type="compositionally biased region" description="Low complexity" evidence="6">
    <location>
        <begin position="25"/>
        <end position="48"/>
    </location>
</feature>
<feature type="compositionally biased region" description="Polar residues" evidence="6">
    <location>
        <begin position="50"/>
        <end position="75"/>
    </location>
</feature>
<feature type="compositionally biased region" description="Low complexity" evidence="6">
    <location>
        <begin position="77"/>
        <end position="101"/>
    </location>
</feature>
<feature type="compositionally biased region" description="Polar residues" evidence="6">
    <location>
        <begin position="129"/>
        <end position="139"/>
    </location>
</feature>
<feature type="compositionally biased region" description="Pro residues" evidence="6">
    <location>
        <begin position="292"/>
        <end position="301"/>
    </location>
</feature>
<feature type="compositionally biased region" description="Polar residues" evidence="6">
    <location>
        <begin position="305"/>
        <end position="314"/>
    </location>
</feature>
<feature type="compositionally biased region" description="Polar residues" evidence="6">
    <location>
        <begin position="340"/>
        <end position="370"/>
    </location>
</feature>
<feature type="compositionally biased region" description="Basic and acidic residues" evidence="6">
    <location>
        <begin position="892"/>
        <end position="912"/>
    </location>
</feature>
<feature type="compositionally biased region" description="Low complexity" evidence="6">
    <location>
        <begin position="919"/>
        <end position="934"/>
    </location>
</feature>
<feature type="compositionally biased region" description="Basic and acidic residues" evidence="6">
    <location>
        <begin position="935"/>
        <end position="953"/>
    </location>
</feature>
<feature type="compositionally biased region" description="Basic and acidic residues" evidence="6">
    <location>
        <begin position="973"/>
        <end position="1009"/>
    </location>
</feature>
<feature type="compositionally biased region" description="Basic and acidic residues" evidence="6">
    <location>
        <begin position="1054"/>
        <end position="1087"/>
    </location>
</feature>
<feature type="compositionally biased region" description="Basic and acidic residues" evidence="6">
    <location>
        <begin position="1101"/>
        <end position="1129"/>
    </location>
</feature>
<feature type="compositionally biased region" description="Basic and acidic residues" evidence="6">
    <location>
        <begin position="1136"/>
        <end position="1153"/>
    </location>
</feature>
<feature type="compositionally biased region" description="Acidic residues" evidence="6">
    <location>
        <begin position="1154"/>
        <end position="1165"/>
    </location>
</feature>
<feature type="compositionally biased region" description="Polar residues" evidence="6">
    <location>
        <begin position="1171"/>
        <end position="1182"/>
    </location>
</feature>
<feature type="compositionally biased region" description="Low complexity" evidence="6">
    <location>
        <begin position="1183"/>
        <end position="1197"/>
    </location>
</feature>
<feature type="compositionally biased region" description="Basic and acidic residues" evidence="6">
    <location>
        <begin position="1279"/>
        <end position="1288"/>
    </location>
</feature>
<feature type="compositionally biased region" description="Pro residues" evidence="6">
    <location>
        <begin position="1369"/>
        <end position="1381"/>
    </location>
</feature>
<feature type="compositionally biased region" description="Pro residues" evidence="6">
    <location>
        <begin position="1389"/>
        <end position="1430"/>
    </location>
</feature>
<gene>
    <name type="primary">pan1</name>
    <name type="ORF">AFUA_7G03870</name>
</gene>
<dbReference type="EMBL" id="AAHF01000009">
    <property type="protein sequence ID" value="EAL87083.1"/>
    <property type="molecule type" value="Genomic_DNA"/>
</dbReference>
<dbReference type="RefSeq" id="XP_749121.1">
    <property type="nucleotide sequence ID" value="XM_744028.1"/>
</dbReference>
<dbReference type="SMR" id="Q4WG58"/>
<dbReference type="FunCoup" id="Q4WG58">
    <property type="interactions" value="58"/>
</dbReference>
<dbReference type="EnsemblFungi" id="EAL87083">
    <property type="protein sequence ID" value="EAL87083"/>
    <property type="gene ID" value="AFUA_7G03870"/>
</dbReference>
<dbReference type="GeneID" id="3506426"/>
<dbReference type="KEGG" id="afm:AFUA_7G03870"/>
<dbReference type="VEuPathDB" id="FungiDB:Afu7g03870"/>
<dbReference type="eggNOG" id="KOG0998">
    <property type="taxonomic scope" value="Eukaryota"/>
</dbReference>
<dbReference type="HOGENOM" id="CLU_001963_1_0_1"/>
<dbReference type="InParanoid" id="Q4WG58"/>
<dbReference type="OMA" id="GMPGQWG"/>
<dbReference type="OrthoDB" id="2015333at2759"/>
<dbReference type="Proteomes" id="UP000002530">
    <property type="component" value="Chromosome 7"/>
</dbReference>
<dbReference type="GO" id="GO:0030479">
    <property type="term" value="C:actin cortical patch"/>
    <property type="evidence" value="ECO:0007669"/>
    <property type="project" value="UniProtKB-SubCell"/>
</dbReference>
<dbReference type="GO" id="GO:0005737">
    <property type="term" value="C:cytoplasm"/>
    <property type="evidence" value="ECO:0000318"/>
    <property type="project" value="GO_Central"/>
</dbReference>
<dbReference type="GO" id="GO:0010008">
    <property type="term" value="C:endosome membrane"/>
    <property type="evidence" value="ECO:0007669"/>
    <property type="project" value="UniProtKB-SubCell"/>
</dbReference>
<dbReference type="GO" id="GO:0005886">
    <property type="term" value="C:plasma membrane"/>
    <property type="evidence" value="ECO:0000318"/>
    <property type="project" value="GO_Central"/>
</dbReference>
<dbReference type="GO" id="GO:0003779">
    <property type="term" value="F:actin binding"/>
    <property type="evidence" value="ECO:0007669"/>
    <property type="project" value="UniProtKB-KW"/>
</dbReference>
<dbReference type="GO" id="GO:0005509">
    <property type="term" value="F:calcium ion binding"/>
    <property type="evidence" value="ECO:0007669"/>
    <property type="project" value="InterPro"/>
</dbReference>
<dbReference type="GO" id="GO:0006897">
    <property type="term" value="P:endocytosis"/>
    <property type="evidence" value="ECO:0000318"/>
    <property type="project" value="GO_Central"/>
</dbReference>
<dbReference type="GO" id="GO:0016197">
    <property type="term" value="P:endosomal transport"/>
    <property type="evidence" value="ECO:0000318"/>
    <property type="project" value="GO_Central"/>
</dbReference>
<dbReference type="CDD" id="cd00052">
    <property type="entry name" value="EH"/>
    <property type="match status" value="2"/>
</dbReference>
<dbReference type="CDD" id="cd22070">
    <property type="entry name" value="WH2_Pan1-like"/>
    <property type="match status" value="1"/>
</dbReference>
<dbReference type="FunFam" id="1.10.238.10:FF:000349">
    <property type="entry name" value="Actin cytoskeleton-regulatory complex protein PAN1"/>
    <property type="match status" value="1"/>
</dbReference>
<dbReference type="Gene3D" id="1.10.238.10">
    <property type="entry name" value="EF-hand"/>
    <property type="match status" value="2"/>
</dbReference>
<dbReference type="InterPro" id="IPR013182">
    <property type="entry name" value="DUF1720"/>
</dbReference>
<dbReference type="InterPro" id="IPR011992">
    <property type="entry name" value="EF-hand-dom_pair"/>
</dbReference>
<dbReference type="InterPro" id="IPR002048">
    <property type="entry name" value="EF_hand_dom"/>
</dbReference>
<dbReference type="InterPro" id="IPR000261">
    <property type="entry name" value="EH_dom"/>
</dbReference>
<dbReference type="InterPro" id="IPR003124">
    <property type="entry name" value="WH2_dom"/>
</dbReference>
<dbReference type="PANTHER" id="PTHR11216:SF170">
    <property type="entry name" value="DYNAMIN ASSOCIATED PROTEIN 160, ISOFORM D"/>
    <property type="match status" value="1"/>
</dbReference>
<dbReference type="PANTHER" id="PTHR11216">
    <property type="entry name" value="EH DOMAIN"/>
    <property type="match status" value="1"/>
</dbReference>
<dbReference type="Pfam" id="PF08226">
    <property type="entry name" value="DUF1720"/>
    <property type="match status" value="1"/>
</dbReference>
<dbReference type="Pfam" id="PF12763">
    <property type="entry name" value="EH"/>
    <property type="match status" value="2"/>
</dbReference>
<dbReference type="Pfam" id="PF02205">
    <property type="entry name" value="WH2"/>
    <property type="match status" value="1"/>
</dbReference>
<dbReference type="SMART" id="SM00027">
    <property type="entry name" value="EH"/>
    <property type="match status" value="2"/>
</dbReference>
<dbReference type="SMART" id="SM00246">
    <property type="entry name" value="WH2"/>
    <property type="match status" value="1"/>
</dbReference>
<dbReference type="SUPFAM" id="SSF47473">
    <property type="entry name" value="EF-hand"/>
    <property type="match status" value="2"/>
</dbReference>
<dbReference type="PROSITE" id="PS50222">
    <property type="entry name" value="EF_HAND_2"/>
    <property type="match status" value="2"/>
</dbReference>
<dbReference type="PROSITE" id="PS50031">
    <property type="entry name" value="EH"/>
    <property type="match status" value="2"/>
</dbReference>
<dbReference type="PROSITE" id="PS51082">
    <property type="entry name" value="WH2"/>
    <property type="match status" value="1"/>
</dbReference>
<sequence length="1467" mass="159383">MYSSSNSFLGGVNNARPGQPPFMQQPPYSQLPQGQQQIPQQTGFQPQPTGYGSQSASHLQPQPTGFPTGQLQPQFTGFPGAAPPQQQQQFGGYQAPAQQPQLTGYPPQSQPPSLQVPSTTGLPTRLAPRTSSEIANSFSDGAGVAPPPPPKSSGSKIPNIRLSFITAQDQAKFEQLFKSAVGDSQTMDGEKAKELLLRSRLPGSELSKIWVLSDTTKSGQLFFPEFALAMYLCNLRITGRELPSTLPDKIKNEVSGMVDIISFGVPDTEPQGAARTNVPSFDAPLLENKSAPPAPQHPKPQQPSNAQFLSQLAAQPTGFGPQATGLQPNQPSLLGANATLAPQTTGFPGQSQQQYLHSQPTGLMTNPQATGYNGPRPPLPPMPTGFGSNLSSMQTGGLAAQPTGIPGQWGFVNAPSSGLPNIEALKQQLMPQPGREGGFTTAGLSGNASIPWAITKEEKKIYDDLFRAWDGLHKGFIGGDTAIEIMGQSGLDRKDLERIWTLADPSNRGRLNMDEFAVAMHLIYRKLNGYPVPNRLPPELIPPSTRNLNDSIGAVKSLLSQDAESRKASGAFLQPQKTGVSYLKEHSFRGGARSPGFGRKDATLFKNNDEAAAGYRSSARRRVGNDARPSSPPTSQASEEELSVEQLKKKIRETQIMLDAVDFKDENRAEEDEVLDRRDRLEAESLMDRTRRVQDDIDTHPNAVFRKLDNGAERRSLRRQLQAFEDQVPQIASEVRRIEREIADAKLELFRLKDAKAHPNSAANIVGTGPGGTVTEADRIKARARARMQARAAELAGRPVPASVDDDGAAVRRLEAESASIRADREKNEAMTRDVEESVREFTRSLEDSLKEEGETSTREHERRRWEDALGVEDVIRDFIYDLQRGSRTAHIRKEEESRASAQEQRLRHEEPSPGVSRLSPAPSAGSAGSLPGSTHEDRVAAARERAQRRIAERMAAAGLKPHTDTSETLLQRQEREKREREERLRRAEEEDAKREQERQRRLAEEQRSTSDTPAKPVGKKPPPAPPSRRGRTDSAGQAEVKKAAEETITAEQAAREQAIREEQQAQEEETNRLEMEAQKREEELLKEKEAQEARLRALEEQVRQGKIRKQEEKRRKEEAERLAKEKEAALAAQRAEIERAKERERQLQLELERLDEESSSDDEGPVNITPEDSTPTQSQLLPTVTPAAPVSAPESEQAGSPEDTSSQAPPVDFKLETESKNPYFKITHQATDTQVVSSPPVPQPSFTSPKADVHSTNPFHRLAKQETSKPAFTGSAPLERKSRARPEADDDWSAAGSEFDSSDDDDDERPGGGSAKQLASILFGTMAPPRPLSAMDDKSPSKSSTPVQDSPVASLPVPESNGSLSAPAAPPPPPPPPPAAVPSYDPSVAPPPPPAPPMAPPAPPPGPPPPPGPLPPPAPPAASGPPTPAGAPDRSALLASIQKGKGLRKVQTNDRSTSSIAGRVLD</sequence>
<proteinExistence type="inferred from homology"/>
<organism>
    <name type="scientific">Aspergillus fumigatus (strain ATCC MYA-4609 / CBS 101355 / FGSC A1100 / Af293)</name>
    <name type="common">Neosartorya fumigata</name>
    <dbReference type="NCBI Taxonomy" id="330879"/>
    <lineage>
        <taxon>Eukaryota</taxon>
        <taxon>Fungi</taxon>
        <taxon>Dikarya</taxon>
        <taxon>Ascomycota</taxon>
        <taxon>Pezizomycotina</taxon>
        <taxon>Eurotiomycetes</taxon>
        <taxon>Eurotiomycetidae</taxon>
        <taxon>Eurotiales</taxon>
        <taxon>Aspergillaceae</taxon>
        <taxon>Aspergillus</taxon>
        <taxon>Aspergillus subgen. Fumigati</taxon>
    </lineage>
</organism>
<keyword id="KW-0009">Actin-binding</keyword>
<keyword id="KW-1003">Cell membrane</keyword>
<keyword id="KW-0175">Coiled coil</keyword>
<keyword id="KW-0963">Cytoplasm</keyword>
<keyword id="KW-0206">Cytoskeleton</keyword>
<keyword id="KW-0254">Endocytosis</keyword>
<keyword id="KW-0967">Endosome</keyword>
<keyword id="KW-0472">Membrane</keyword>
<keyword id="KW-1185">Reference proteome</keyword>
<keyword id="KW-0677">Repeat</keyword>